<comment type="function">
    <text evidence="1">Catalyzes the ATP-dependent amination of UTP to CTP with either L-glutamine or ammonia as the source of nitrogen. Regulates intracellular CTP levels through interactions with the four ribonucleotide triphosphates.</text>
</comment>
<comment type="catalytic activity">
    <reaction evidence="1">
        <text>UTP + L-glutamine + ATP + H2O = CTP + L-glutamate + ADP + phosphate + 2 H(+)</text>
        <dbReference type="Rhea" id="RHEA:26426"/>
        <dbReference type="ChEBI" id="CHEBI:15377"/>
        <dbReference type="ChEBI" id="CHEBI:15378"/>
        <dbReference type="ChEBI" id="CHEBI:29985"/>
        <dbReference type="ChEBI" id="CHEBI:30616"/>
        <dbReference type="ChEBI" id="CHEBI:37563"/>
        <dbReference type="ChEBI" id="CHEBI:43474"/>
        <dbReference type="ChEBI" id="CHEBI:46398"/>
        <dbReference type="ChEBI" id="CHEBI:58359"/>
        <dbReference type="ChEBI" id="CHEBI:456216"/>
        <dbReference type="EC" id="6.3.4.2"/>
    </reaction>
</comment>
<comment type="catalytic activity">
    <reaction evidence="1">
        <text>L-glutamine + H2O = L-glutamate + NH4(+)</text>
        <dbReference type="Rhea" id="RHEA:15889"/>
        <dbReference type="ChEBI" id="CHEBI:15377"/>
        <dbReference type="ChEBI" id="CHEBI:28938"/>
        <dbReference type="ChEBI" id="CHEBI:29985"/>
        <dbReference type="ChEBI" id="CHEBI:58359"/>
    </reaction>
</comment>
<comment type="catalytic activity">
    <reaction evidence="1">
        <text>UTP + NH4(+) + ATP = CTP + ADP + phosphate + 2 H(+)</text>
        <dbReference type="Rhea" id="RHEA:16597"/>
        <dbReference type="ChEBI" id="CHEBI:15378"/>
        <dbReference type="ChEBI" id="CHEBI:28938"/>
        <dbReference type="ChEBI" id="CHEBI:30616"/>
        <dbReference type="ChEBI" id="CHEBI:37563"/>
        <dbReference type="ChEBI" id="CHEBI:43474"/>
        <dbReference type="ChEBI" id="CHEBI:46398"/>
        <dbReference type="ChEBI" id="CHEBI:456216"/>
    </reaction>
</comment>
<comment type="activity regulation">
    <text evidence="1">Allosterically activated by GTP, when glutamine is the substrate; GTP has no effect on the reaction when ammonia is the substrate. The allosteric effector GTP functions by stabilizing the protein conformation that binds the tetrahedral intermediate(s) formed during glutamine hydrolysis. Inhibited by the product CTP, via allosteric rather than competitive inhibition.</text>
</comment>
<comment type="pathway">
    <text evidence="1">Pyrimidine metabolism; CTP biosynthesis via de novo pathway; CTP from UDP: step 2/2.</text>
</comment>
<comment type="subunit">
    <text evidence="1">Homotetramer.</text>
</comment>
<comment type="miscellaneous">
    <text evidence="1">CTPSs have evolved a hybrid strategy for distinguishing between UTP and CTP. The overlapping regions of the product feedback inhibitory and substrate sites recognize a common feature in both compounds, the triphosphate moiety. To differentiate isosteric substrate and product pyrimidine rings, an additional pocket far from the expected kinase/ligase catalytic site, specifically recognizes the cytosine and ribose portions of the product inhibitor.</text>
</comment>
<comment type="similarity">
    <text evidence="1">Belongs to the CTP synthase family.</text>
</comment>
<proteinExistence type="inferred from homology"/>
<organism>
    <name type="scientific">Francisella tularensis subsp. tularensis (strain WY96-3418)</name>
    <dbReference type="NCBI Taxonomy" id="418136"/>
    <lineage>
        <taxon>Bacteria</taxon>
        <taxon>Pseudomonadati</taxon>
        <taxon>Pseudomonadota</taxon>
        <taxon>Gammaproteobacteria</taxon>
        <taxon>Thiotrichales</taxon>
        <taxon>Francisellaceae</taxon>
        <taxon>Francisella</taxon>
    </lineage>
</organism>
<reference key="1">
    <citation type="journal article" date="2007" name="PLoS ONE">
        <title>Complete genomic characterization of a pathogenic A.II strain of Francisella tularensis subspecies tularensis.</title>
        <authorList>
            <person name="Beckstrom-Sternberg S.M."/>
            <person name="Auerbach R.K."/>
            <person name="Godbole S."/>
            <person name="Pearson J.V."/>
            <person name="Beckstrom-Sternberg J.S."/>
            <person name="Deng Z."/>
            <person name="Munk C."/>
            <person name="Kubota K."/>
            <person name="Zhou Y."/>
            <person name="Bruce D."/>
            <person name="Noronha J."/>
            <person name="Scheuermann R.H."/>
            <person name="Wang A."/>
            <person name="Wei X."/>
            <person name="Wang J."/>
            <person name="Hao J."/>
            <person name="Wagner D.M."/>
            <person name="Brettin T.S."/>
            <person name="Brown N."/>
            <person name="Gilna P."/>
            <person name="Keim P.S."/>
        </authorList>
    </citation>
    <scope>NUCLEOTIDE SEQUENCE [LARGE SCALE GENOMIC DNA]</scope>
    <source>
        <strain>WY96-3418</strain>
    </source>
</reference>
<name>PYRG_FRATW</name>
<accession>A4IZP3</accession>
<feature type="chain" id="PRO_1000139462" description="CTP synthase">
    <location>
        <begin position="1"/>
        <end position="546"/>
    </location>
</feature>
<feature type="domain" description="Glutamine amidotransferase type-1" evidence="1">
    <location>
        <begin position="294"/>
        <end position="546"/>
    </location>
</feature>
<feature type="region of interest" description="Amidoligase domain" evidence="1">
    <location>
        <begin position="1"/>
        <end position="269"/>
    </location>
</feature>
<feature type="active site" description="Nucleophile; for glutamine hydrolysis" evidence="1">
    <location>
        <position position="383"/>
    </location>
</feature>
<feature type="active site" evidence="1">
    <location>
        <position position="519"/>
    </location>
</feature>
<feature type="active site" evidence="1">
    <location>
        <position position="521"/>
    </location>
</feature>
<feature type="binding site" evidence="1">
    <location>
        <position position="16"/>
    </location>
    <ligand>
        <name>CTP</name>
        <dbReference type="ChEBI" id="CHEBI:37563"/>
        <note>allosteric inhibitor</note>
    </ligand>
</feature>
<feature type="binding site" evidence="1">
    <location>
        <position position="16"/>
    </location>
    <ligand>
        <name>UTP</name>
        <dbReference type="ChEBI" id="CHEBI:46398"/>
    </ligand>
</feature>
<feature type="binding site" evidence="1">
    <location>
        <begin position="17"/>
        <end position="22"/>
    </location>
    <ligand>
        <name>ATP</name>
        <dbReference type="ChEBI" id="CHEBI:30616"/>
    </ligand>
</feature>
<feature type="binding site" evidence="1">
    <location>
        <position position="74"/>
    </location>
    <ligand>
        <name>ATP</name>
        <dbReference type="ChEBI" id="CHEBI:30616"/>
    </ligand>
</feature>
<feature type="binding site" evidence="1">
    <location>
        <position position="74"/>
    </location>
    <ligand>
        <name>Mg(2+)</name>
        <dbReference type="ChEBI" id="CHEBI:18420"/>
    </ligand>
</feature>
<feature type="binding site" evidence="1">
    <location>
        <position position="143"/>
    </location>
    <ligand>
        <name>Mg(2+)</name>
        <dbReference type="ChEBI" id="CHEBI:18420"/>
    </ligand>
</feature>
<feature type="binding site" evidence="1">
    <location>
        <begin position="150"/>
        <end position="152"/>
    </location>
    <ligand>
        <name>CTP</name>
        <dbReference type="ChEBI" id="CHEBI:37563"/>
        <note>allosteric inhibitor</note>
    </ligand>
</feature>
<feature type="binding site" evidence="1">
    <location>
        <begin position="190"/>
        <end position="195"/>
    </location>
    <ligand>
        <name>CTP</name>
        <dbReference type="ChEBI" id="CHEBI:37563"/>
        <note>allosteric inhibitor</note>
    </ligand>
</feature>
<feature type="binding site" evidence="1">
    <location>
        <begin position="190"/>
        <end position="195"/>
    </location>
    <ligand>
        <name>UTP</name>
        <dbReference type="ChEBI" id="CHEBI:46398"/>
    </ligand>
</feature>
<feature type="binding site" evidence="1">
    <location>
        <position position="226"/>
    </location>
    <ligand>
        <name>CTP</name>
        <dbReference type="ChEBI" id="CHEBI:37563"/>
        <note>allosteric inhibitor</note>
    </ligand>
</feature>
<feature type="binding site" evidence="1">
    <location>
        <position position="226"/>
    </location>
    <ligand>
        <name>UTP</name>
        <dbReference type="ChEBI" id="CHEBI:46398"/>
    </ligand>
</feature>
<feature type="binding site" evidence="1">
    <location>
        <position position="356"/>
    </location>
    <ligand>
        <name>L-glutamine</name>
        <dbReference type="ChEBI" id="CHEBI:58359"/>
    </ligand>
</feature>
<feature type="binding site" evidence="1">
    <location>
        <begin position="384"/>
        <end position="387"/>
    </location>
    <ligand>
        <name>L-glutamine</name>
        <dbReference type="ChEBI" id="CHEBI:58359"/>
    </ligand>
</feature>
<feature type="binding site" evidence="1">
    <location>
        <position position="407"/>
    </location>
    <ligand>
        <name>L-glutamine</name>
        <dbReference type="ChEBI" id="CHEBI:58359"/>
    </ligand>
</feature>
<feature type="binding site" evidence="1">
    <location>
        <position position="474"/>
    </location>
    <ligand>
        <name>L-glutamine</name>
        <dbReference type="ChEBI" id="CHEBI:58359"/>
    </ligand>
</feature>
<sequence>MNSNTKIIFVTGGVVSSLGKGVTAASLATLLESRGLNVTMMKLDPYINVDPGTMSPLQHGEVFVTEDGAETDLDLGHYERFIRNKMTQANNFTTGKVYQSVLRRERKGDYLGATIQVIPHITDEIKRRICSGIADDVDVAIVEIGGTVGDIESQPFLEAIRQLRIELGRNRTLFVHLTLLPYIKVAGEIKTKPTQHSVKELRGIGIQADVLVCRCEKKFDDSEKRKIALFTNVDQDCIFTAEDVDTIYEVPLKYNQQGFDAKLVELLNLNAKEADLSEWQNVVNTIRDVKGEVTIAMVGKYVSLTEAYKSLNEALYNAGYKKGVKVKIKFVDSEDVNENNVESYFKDVAAILVPGGFGSRGVEGKIISIKYARENQIPFLGICLGMQLAVIEYARNILGIKDAHSSELEPTTANPVIGLITEWQAEDGTVHQRTHSSDLGGTMRLGGYKCVLKQGSRAREIYQADEVVERHRHRYEVNSNYVERLEEAGLIFSGRSEDNKLMELIEIPQHKWFIACQAHPEFTSTPRYGHKLFESYIQAAIENSNN</sequence>
<keyword id="KW-0067">ATP-binding</keyword>
<keyword id="KW-0315">Glutamine amidotransferase</keyword>
<keyword id="KW-0436">Ligase</keyword>
<keyword id="KW-0460">Magnesium</keyword>
<keyword id="KW-0479">Metal-binding</keyword>
<keyword id="KW-0547">Nucleotide-binding</keyword>
<keyword id="KW-0665">Pyrimidine biosynthesis</keyword>
<protein>
    <recommendedName>
        <fullName evidence="1">CTP synthase</fullName>
        <ecNumber evidence="1">6.3.4.2</ecNumber>
    </recommendedName>
    <alternativeName>
        <fullName evidence="1">Cytidine 5'-triphosphate synthase</fullName>
    </alternativeName>
    <alternativeName>
        <fullName evidence="1">Cytidine triphosphate synthetase</fullName>
        <shortName evidence="1">CTP synthetase</shortName>
        <shortName evidence="1">CTPS</shortName>
    </alternativeName>
    <alternativeName>
        <fullName evidence="1">UTP--ammonia ligase</fullName>
    </alternativeName>
</protein>
<gene>
    <name evidence="1" type="primary">pyrG</name>
    <name type="ordered locus">FTW_1708</name>
</gene>
<dbReference type="EC" id="6.3.4.2" evidence="1"/>
<dbReference type="EMBL" id="CP000608">
    <property type="protein sequence ID" value="ABO47393.1"/>
    <property type="molecule type" value="Genomic_DNA"/>
</dbReference>
<dbReference type="RefSeq" id="WP_003020026.1">
    <property type="nucleotide sequence ID" value="NC_009257.1"/>
</dbReference>
<dbReference type="SMR" id="A4IZP3"/>
<dbReference type="MEROPS" id="C26.964"/>
<dbReference type="KEGG" id="ftw:FTW_1708"/>
<dbReference type="HOGENOM" id="CLU_011675_5_0_6"/>
<dbReference type="UniPathway" id="UPA00159">
    <property type="reaction ID" value="UER00277"/>
</dbReference>
<dbReference type="GO" id="GO:0005829">
    <property type="term" value="C:cytosol"/>
    <property type="evidence" value="ECO:0007669"/>
    <property type="project" value="TreeGrafter"/>
</dbReference>
<dbReference type="GO" id="GO:0005524">
    <property type="term" value="F:ATP binding"/>
    <property type="evidence" value="ECO:0007669"/>
    <property type="project" value="UniProtKB-KW"/>
</dbReference>
<dbReference type="GO" id="GO:0003883">
    <property type="term" value="F:CTP synthase activity"/>
    <property type="evidence" value="ECO:0007669"/>
    <property type="project" value="UniProtKB-UniRule"/>
</dbReference>
<dbReference type="GO" id="GO:0004359">
    <property type="term" value="F:glutaminase activity"/>
    <property type="evidence" value="ECO:0007669"/>
    <property type="project" value="RHEA"/>
</dbReference>
<dbReference type="GO" id="GO:0042802">
    <property type="term" value="F:identical protein binding"/>
    <property type="evidence" value="ECO:0007669"/>
    <property type="project" value="TreeGrafter"/>
</dbReference>
<dbReference type="GO" id="GO:0046872">
    <property type="term" value="F:metal ion binding"/>
    <property type="evidence" value="ECO:0007669"/>
    <property type="project" value="UniProtKB-KW"/>
</dbReference>
<dbReference type="GO" id="GO:0044210">
    <property type="term" value="P:'de novo' CTP biosynthetic process"/>
    <property type="evidence" value="ECO:0007669"/>
    <property type="project" value="UniProtKB-UniRule"/>
</dbReference>
<dbReference type="GO" id="GO:0019856">
    <property type="term" value="P:pyrimidine nucleobase biosynthetic process"/>
    <property type="evidence" value="ECO:0007669"/>
    <property type="project" value="TreeGrafter"/>
</dbReference>
<dbReference type="CDD" id="cd03113">
    <property type="entry name" value="CTPS_N"/>
    <property type="match status" value="1"/>
</dbReference>
<dbReference type="CDD" id="cd01746">
    <property type="entry name" value="GATase1_CTP_Synthase"/>
    <property type="match status" value="1"/>
</dbReference>
<dbReference type="FunFam" id="3.40.50.300:FF:000009">
    <property type="entry name" value="CTP synthase"/>
    <property type="match status" value="1"/>
</dbReference>
<dbReference type="FunFam" id="3.40.50.880:FF:000002">
    <property type="entry name" value="CTP synthase"/>
    <property type="match status" value="1"/>
</dbReference>
<dbReference type="Gene3D" id="3.40.50.880">
    <property type="match status" value="1"/>
</dbReference>
<dbReference type="Gene3D" id="3.40.50.300">
    <property type="entry name" value="P-loop containing nucleotide triphosphate hydrolases"/>
    <property type="match status" value="1"/>
</dbReference>
<dbReference type="HAMAP" id="MF_01227">
    <property type="entry name" value="PyrG"/>
    <property type="match status" value="1"/>
</dbReference>
<dbReference type="InterPro" id="IPR029062">
    <property type="entry name" value="Class_I_gatase-like"/>
</dbReference>
<dbReference type="InterPro" id="IPR004468">
    <property type="entry name" value="CTP_synthase"/>
</dbReference>
<dbReference type="InterPro" id="IPR017456">
    <property type="entry name" value="CTP_synthase_N"/>
</dbReference>
<dbReference type="InterPro" id="IPR017926">
    <property type="entry name" value="GATASE"/>
</dbReference>
<dbReference type="InterPro" id="IPR033828">
    <property type="entry name" value="GATase1_CTP_Synthase"/>
</dbReference>
<dbReference type="InterPro" id="IPR027417">
    <property type="entry name" value="P-loop_NTPase"/>
</dbReference>
<dbReference type="NCBIfam" id="NF003792">
    <property type="entry name" value="PRK05380.1"/>
    <property type="match status" value="1"/>
</dbReference>
<dbReference type="NCBIfam" id="TIGR00337">
    <property type="entry name" value="PyrG"/>
    <property type="match status" value="1"/>
</dbReference>
<dbReference type="PANTHER" id="PTHR11550">
    <property type="entry name" value="CTP SYNTHASE"/>
    <property type="match status" value="1"/>
</dbReference>
<dbReference type="PANTHER" id="PTHR11550:SF0">
    <property type="entry name" value="CTP SYNTHASE-RELATED"/>
    <property type="match status" value="1"/>
</dbReference>
<dbReference type="Pfam" id="PF06418">
    <property type="entry name" value="CTP_synth_N"/>
    <property type="match status" value="1"/>
</dbReference>
<dbReference type="Pfam" id="PF00117">
    <property type="entry name" value="GATase"/>
    <property type="match status" value="1"/>
</dbReference>
<dbReference type="SUPFAM" id="SSF52317">
    <property type="entry name" value="Class I glutamine amidotransferase-like"/>
    <property type="match status" value="1"/>
</dbReference>
<dbReference type="SUPFAM" id="SSF52540">
    <property type="entry name" value="P-loop containing nucleoside triphosphate hydrolases"/>
    <property type="match status" value="1"/>
</dbReference>
<dbReference type="PROSITE" id="PS51273">
    <property type="entry name" value="GATASE_TYPE_1"/>
    <property type="match status" value="1"/>
</dbReference>
<evidence type="ECO:0000255" key="1">
    <source>
        <dbReference type="HAMAP-Rule" id="MF_01227"/>
    </source>
</evidence>